<evidence type="ECO:0000250" key="1"/>
<evidence type="ECO:0000305" key="2"/>
<name>FBSB_SYNS3</name>
<proteinExistence type="inferred from homology"/>
<keyword id="KW-0113">Calvin cycle</keyword>
<keyword id="KW-0119">Carbohydrate metabolism</keyword>
<keyword id="KW-0378">Hydrolase</keyword>
<keyword id="KW-0464">Manganese</keyword>
<keyword id="KW-0479">Metal-binding</keyword>
<keyword id="KW-1185">Reference proteome</keyword>
<reference key="1">
    <citation type="journal article" date="2006" name="Proc. Natl. Acad. Sci. U.S.A.">
        <title>Genome sequence of Synechococcus CC9311: insights into adaptation to a coastal environment.</title>
        <authorList>
            <person name="Palenik B."/>
            <person name="Ren Q."/>
            <person name="Dupont C.L."/>
            <person name="Myers G.S."/>
            <person name="Heidelberg J.F."/>
            <person name="Badger J.H."/>
            <person name="Madupu R."/>
            <person name="Nelson W.C."/>
            <person name="Brinkac L.M."/>
            <person name="Dodson R.J."/>
            <person name="Durkin A.S."/>
            <person name="Daugherty S.C."/>
            <person name="Sullivan S.A."/>
            <person name="Khouri H."/>
            <person name="Mohamoud Y."/>
            <person name="Halpin R."/>
            <person name="Paulsen I.T."/>
        </authorList>
    </citation>
    <scope>NUCLEOTIDE SEQUENCE [LARGE SCALE GENOMIC DNA]</scope>
    <source>
        <strain>CC9311</strain>
    </source>
</reference>
<protein>
    <recommendedName>
        <fullName>D-fructose 1,6-bisphosphatase class 2/sedoheptulose 1,7-bisphosphatase</fullName>
        <shortName>FBPase class 2/SBPase</shortName>
        <ecNumber>3.1.3.11</ecNumber>
        <ecNumber>3.1.3.37</ecNumber>
    </recommendedName>
</protein>
<feature type="chain" id="PRO_0000342727" description="D-fructose 1,6-bisphosphatase class 2/sedoheptulose 1,7-bisphosphatase">
    <location>
        <begin position="1"/>
        <end position="334"/>
    </location>
</feature>
<feature type="binding site" evidence="1">
    <location>
        <position position="33"/>
    </location>
    <ligand>
        <name>Mn(2+)</name>
        <dbReference type="ChEBI" id="CHEBI:29035"/>
        <label>1</label>
    </ligand>
</feature>
<feature type="binding site" evidence="1">
    <location>
        <position position="57"/>
    </location>
    <ligand>
        <name>Mn(2+)</name>
        <dbReference type="ChEBI" id="CHEBI:29035"/>
        <label>1</label>
    </ligand>
</feature>
<feature type="binding site" evidence="1">
    <location>
        <position position="85"/>
    </location>
    <ligand>
        <name>Mn(2+)</name>
        <dbReference type="ChEBI" id="CHEBI:29035"/>
        <label>2</label>
    </ligand>
</feature>
<feature type="binding site" evidence="1">
    <location>
        <begin position="88"/>
        <end position="90"/>
    </location>
    <ligand>
        <name>substrate</name>
    </ligand>
</feature>
<feature type="binding site" evidence="1">
    <location>
        <position position="88"/>
    </location>
    <ligand>
        <name>Mn(2+)</name>
        <dbReference type="ChEBI" id="CHEBI:29035"/>
        <label>2</label>
    </ligand>
</feature>
<feature type="binding site" evidence="1">
    <location>
        <position position="119"/>
    </location>
    <ligand>
        <name>substrate</name>
    </ligand>
</feature>
<feature type="binding site" evidence="1">
    <location>
        <begin position="164"/>
        <end position="166"/>
    </location>
    <ligand>
        <name>substrate</name>
    </ligand>
</feature>
<feature type="binding site" evidence="1">
    <location>
        <begin position="186"/>
        <end position="188"/>
    </location>
    <ligand>
        <name>substrate</name>
    </ligand>
</feature>
<feature type="binding site" evidence="1">
    <location>
        <position position="213"/>
    </location>
    <ligand>
        <name>Mn(2+)</name>
        <dbReference type="ChEBI" id="CHEBI:29035"/>
        <label>2</label>
    </ligand>
</feature>
<organism>
    <name type="scientific">Synechococcus sp. (strain CC9311)</name>
    <dbReference type="NCBI Taxonomy" id="64471"/>
    <lineage>
        <taxon>Bacteria</taxon>
        <taxon>Bacillati</taxon>
        <taxon>Cyanobacteriota</taxon>
        <taxon>Cyanophyceae</taxon>
        <taxon>Synechococcales</taxon>
        <taxon>Synechococcaceae</taxon>
        <taxon>Synechococcus</taxon>
    </lineage>
</organism>
<sequence length="334" mass="35229">MDRTLIQEILEIVEQAAIASATLSGKGLKDEADALAVDAMRKRMNQIQMKGRIVIGEGERDEAPMLYIGEEVGTGTGPGVDFAVDPCEGTNLCAYSQRGSMAVLAASDRGGLFNAPDFYMKKLAAPPAAKGKVDIRKSATENIKILSECLGLAPDELTIVVMDRARHKDLITEIRATGARIQPISDGDVQAAIACGFAGTGTHCLMGIGAAPEGVISAAAMRALGGHFQGQLVYDPAIAQTSEWADMTKEGNLARLAEMGITDPDKVYEASELACGEHVVFAGSGITDGLLFNGVKFETDCTRTSSLIISNLNNTCSFTNTIHMKDGAQSIALN</sequence>
<gene>
    <name type="ordered locus">sync_1685</name>
</gene>
<comment type="function">
    <text evidence="1">Catalyzes the hydrolysis of fructose 1,6-bisphosphate (Fru 1,6-P2) and sedoheptulose 1,7-bisphosphate (Sed 1,7-P2) to fructose 6-phosphate and sedoheptulose 7-phosphate, respectively.</text>
</comment>
<comment type="catalytic activity">
    <reaction>
        <text>beta-D-fructose 1,6-bisphosphate + H2O = beta-D-fructose 6-phosphate + phosphate</text>
        <dbReference type="Rhea" id="RHEA:11064"/>
        <dbReference type="ChEBI" id="CHEBI:15377"/>
        <dbReference type="ChEBI" id="CHEBI:32966"/>
        <dbReference type="ChEBI" id="CHEBI:43474"/>
        <dbReference type="ChEBI" id="CHEBI:57634"/>
        <dbReference type="EC" id="3.1.3.11"/>
    </reaction>
</comment>
<comment type="catalytic activity">
    <reaction>
        <text>D-sedoheptulose 1,7-bisphosphate + H2O = D-sedoheptulose 7-phosphate + phosphate</text>
        <dbReference type="Rhea" id="RHEA:17461"/>
        <dbReference type="ChEBI" id="CHEBI:15377"/>
        <dbReference type="ChEBI" id="CHEBI:43474"/>
        <dbReference type="ChEBI" id="CHEBI:57483"/>
        <dbReference type="ChEBI" id="CHEBI:58335"/>
        <dbReference type="EC" id="3.1.3.37"/>
    </reaction>
</comment>
<comment type="cofactor">
    <cofactor evidence="1">
        <name>Mn(2+)</name>
        <dbReference type="ChEBI" id="CHEBI:29035"/>
    </cofactor>
</comment>
<comment type="pathway">
    <text>Carbohydrate biosynthesis; Calvin cycle.</text>
</comment>
<comment type="subunit">
    <text evidence="1">Homotetramer.</text>
</comment>
<comment type="similarity">
    <text evidence="2">Belongs to the FBPase class 2 family.</text>
</comment>
<comment type="sequence caution" evidence="2">
    <conflict type="erroneous initiation">
        <sequence resource="EMBL-CDS" id="ABI45184"/>
    </conflict>
</comment>
<accession>Q0I9I3</accession>
<dbReference type="EC" id="3.1.3.11"/>
<dbReference type="EC" id="3.1.3.37"/>
<dbReference type="EMBL" id="CP000435">
    <property type="protein sequence ID" value="ABI45184.1"/>
    <property type="status" value="ALT_INIT"/>
    <property type="molecule type" value="Genomic_DNA"/>
</dbReference>
<dbReference type="RefSeq" id="WP_041427028.1">
    <property type="nucleotide sequence ID" value="NC_008319.1"/>
</dbReference>
<dbReference type="SMR" id="Q0I9I3"/>
<dbReference type="STRING" id="64471.sync_1685"/>
<dbReference type="KEGG" id="syg:sync_1685"/>
<dbReference type="eggNOG" id="COG1494">
    <property type="taxonomic scope" value="Bacteria"/>
</dbReference>
<dbReference type="HOGENOM" id="CLU_054938_0_0_3"/>
<dbReference type="OrthoDB" id="9779353at2"/>
<dbReference type="UniPathway" id="UPA00116"/>
<dbReference type="Proteomes" id="UP000001961">
    <property type="component" value="Chromosome"/>
</dbReference>
<dbReference type="GO" id="GO:0005829">
    <property type="term" value="C:cytosol"/>
    <property type="evidence" value="ECO:0007669"/>
    <property type="project" value="TreeGrafter"/>
</dbReference>
<dbReference type="GO" id="GO:0042132">
    <property type="term" value="F:fructose 1,6-bisphosphate 1-phosphatase activity"/>
    <property type="evidence" value="ECO:0007669"/>
    <property type="project" value="UniProtKB-EC"/>
</dbReference>
<dbReference type="GO" id="GO:0046872">
    <property type="term" value="F:metal ion binding"/>
    <property type="evidence" value="ECO:0007669"/>
    <property type="project" value="UniProtKB-KW"/>
</dbReference>
<dbReference type="GO" id="GO:0050278">
    <property type="term" value="F:sedoheptulose-bisphosphatase activity"/>
    <property type="evidence" value="ECO:0007669"/>
    <property type="project" value="UniProtKB-EC"/>
</dbReference>
<dbReference type="GO" id="GO:0030388">
    <property type="term" value="P:fructose 1,6-bisphosphate metabolic process"/>
    <property type="evidence" value="ECO:0007669"/>
    <property type="project" value="TreeGrafter"/>
</dbReference>
<dbReference type="GO" id="GO:0006094">
    <property type="term" value="P:gluconeogenesis"/>
    <property type="evidence" value="ECO:0007669"/>
    <property type="project" value="InterPro"/>
</dbReference>
<dbReference type="GO" id="GO:0006071">
    <property type="term" value="P:glycerol metabolic process"/>
    <property type="evidence" value="ECO:0007669"/>
    <property type="project" value="InterPro"/>
</dbReference>
<dbReference type="GO" id="GO:0019253">
    <property type="term" value="P:reductive pentose-phosphate cycle"/>
    <property type="evidence" value="ECO:0007669"/>
    <property type="project" value="UniProtKB-UniPathway"/>
</dbReference>
<dbReference type="CDD" id="cd01516">
    <property type="entry name" value="FBPase_glpX"/>
    <property type="match status" value="1"/>
</dbReference>
<dbReference type="FunFam" id="3.40.190.90:FF:000001">
    <property type="entry name" value="Fructose-1,6-bisphosphatase"/>
    <property type="match status" value="1"/>
</dbReference>
<dbReference type="Gene3D" id="3.40.190.90">
    <property type="match status" value="1"/>
</dbReference>
<dbReference type="Gene3D" id="3.30.540.10">
    <property type="entry name" value="Fructose-1,6-Bisphosphatase, subunit A, domain 1"/>
    <property type="match status" value="1"/>
</dbReference>
<dbReference type="InterPro" id="IPR004464">
    <property type="entry name" value="FBPase_class-2/SBPase"/>
</dbReference>
<dbReference type="NCBIfam" id="TIGR00330">
    <property type="entry name" value="glpX"/>
    <property type="match status" value="1"/>
</dbReference>
<dbReference type="PANTHER" id="PTHR30447:SF0">
    <property type="entry name" value="FRUCTOSE-1,6-BISPHOSPHATASE 1 CLASS 2-RELATED"/>
    <property type="match status" value="1"/>
</dbReference>
<dbReference type="PANTHER" id="PTHR30447">
    <property type="entry name" value="FRUCTOSE-1,6-BISPHOSPHATASE CLASS 2"/>
    <property type="match status" value="1"/>
</dbReference>
<dbReference type="Pfam" id="PF03320">
    <property type="entry name" value="FBPase_glpX"/>
    <property type="match status" value="1"/>
</dbReference>
<dbReference type="PIRSF" id="PIRSF004532">
    <property type="entry name" value="GlpX"/>
    <property type="match status" value="1"/>
</dbReference>
<dbReference type="SUPFAM" id="SSF56655">
    <property type="entry name" value="Carbohydrate phosphatase"/>
    <property type="match status" value="1"/>
</dbReference>